<name>CCME_RHIME</name>
<dbReference type="EMBL" id="X82560">
    <property type="protein sequence ID" value="CAA57905.1"/>
    <property type="molecule type" value="Genomic_DNA"/>
</dbReference>
<dbReference type="EMBL" id="AL591688">
    <property type="protein sequence ID" value="CAC45590.1"/>
    <property type="molecule type" value="Genomic_DNA"/>
</dbReference>
<dbReference type="PIR" id="S54749">
    <property type="entry name" value="S49615"/>
</dbReference>
<dbReference type="RefSeq" id="NP_385124.1">
    <property type="nucleotide sequence ID" value="NC_003047.1"/>
</dbReference>
<dbReference type="RefSeq" id="WP_003527358.1">
    <property type="nucleotide sequence ID" value="NC_003047.1"/>
</dbReference>
<dbReference type="SMR" id="P45402"/>
<dbReference type="EnsemblBacteria" id="CAC45590">
    <property type="protein sequence ID" value="CAC45590"/>
    <property type="gene ID" value="SMc02362"/>
</dbReference>
<dbReference type="GeneID" id="89575342"/>
<dbReference type="KEGG" id="sme:SMc02362"/>
<dbReference type="PATRIC" id="fig|266834.11.peg.2422"/>
<dbReference type="eggNOG" id="COG2332">
    <property type="taxonomic scope" value="Bacteria"/>
</dbReference>
<dbReference type="HOGENOM" id="CLU_079503_1_1_5"/>
<dbReference type="OrthoDB" id="9793584at2"/>
<dbReference type="Proteomes" id="UP000001976">
    <property type="component" value="Chromosome"/>
</dbReference>
<dbReference type="GO" id="GO:0005886">
    <property type="term" value="C:plasma membrane"/>
    <property type="evidence" value="ECO:0007669"/>
    <property type="project" value="UniProtKB-SubCell"/>
</dbReference>
<dbReference type="GO" id="GO:0020037">
    <property type="term" value="F:heme binding"/>
    <property type="evidence" value="ECO:0007669"/>
    <property type="project" value="InterPro"/>
</dbReference>
<dbReference type="GO" id="GO:0046872">
    <property type="term" value="F:metal ion binding"/>
    <property type="evidence" value="ECO:0007669"/>
    <property type="project" value="UniProtKB-KW"/>
</dbReference>
<dbReference type="GO" id="GO:0017004">
    <property type="term" value="P:cytochrome complex assembly"/>
    <property type="evidence" value="ECO:0007669"/>
    <property type="project" value="UniProtKB-KW"/>
</dbReference>
<dbReference type="Gene3D" id="2.40.50.140">
    <property type="entry name" value="Nucleic acid-binding proteins"/>
    <property type="match status" value="1"/>
</dbReference>
<dbReference type="HAMAP" id="MF_01959">
    <property type="entry name" value="CcmE"/>
    <property type="match status" value="1"/>
</dbReference>
<dbReference type="InterPro" id="IPR004329">
    <property type="entry name" value="CcmE"/>
</dbReference>
<dbReference type="InterPro" id="IPR036127">
    <property type="entry name" value="CcmE-like_sf"/>
</dbReference>
<dbReference type="InterPro" id="IPR012340">
    <property type="entry name" value="NA-bd_OB-fold"/>
</dbReference>
<dbReference type="NCBIfam" id="NF009727">
    <property type="entry name" value="PRK13254.1-1"/>
    <property type="match status" value="1"/>
</dbReference>
<dbReference type="NCBIfam" id="NF009731">
    <property type="entry name" value="PRK13254.1-5"/>
    <property type="match status" value="1"/>
</dbReference>
<dbReference type="PANTHER" id="PTHR34128">
    <property type="entry name" value="CYTOCHROME C-TYPE BIOGENESIS PROTEIN CCME HOMOLOG, MITOCHONDRIAL"/>
    <property type="match status" value="1"/>
</dbReference>
<dbReference type="PANTHER" id="PTHR34128:SF2">
    <property type="entry name" value="CYTOCHROME C-TYPE BIOGENESIS PROTEIN CCME HOMOLOG, MITOCHONDRIAL"/>
    <property type="match status" value="1"/>
</dbReference>
<dbReference type="Pfam" id="PF03100">
    <property type="entry name" value="CcmE"/>
    <property type="match status" value="1"/>
</dbReference>
<dbReference type="SUPFAM" id="SSF82093">
    <property type="entry name" value="Heme chaperone CcmE"/>
    <property type="match status" value="1"/>
</dbReference>
<evidence type="ECO:0000255" key="1">
    <source>
        <dbReference type="HAMAP-Rule" id="MF_01959"/>
    </source>
</evidence>
<reference key="1">
    <citation type="journal article" date="1995" name="Mol. Gen. Genet.">
        <title>The cycHJKL genes of Rhizobium meliloti involved in cytochrome c biogenesis are required for 'respiratory' nitrate reduction ex planta and for nitrogen fixation during symbiosis.</title>
        <authorList>
            <person name="Kereszt A."/>
            <person name="Slaska-Kiss K."/>
            <person name="Putnoky P."/>
            <person name="Banfalvi Z."/>
            <person name="Kondorosi A."/>
        </authorList>
    </citation>
    <scope>NUCLEOTIDE SEQUENCE [GENOMIC DNA]</scope>
    <source>
        <strain>AK631</strain>
    </source>
</reference>
<reference key="2">
    <citation type="journal article" date="2001" name="Proc. Natl. Acad. Sci. U.S.A.">
        <title>Analysis of the chromosome sequence of the legume symbiont Sinorhizobium meliloti strain 1021.</title>
        <authorList>
            <person name="Capela D."/>
            <person name="Barloy-Hubler F."/>
            <person name="Gouzy J."/>
            <person name="Bothe G."/>
            <person name="Ampe F."/>
            <person name="Batut J."/>
            <person name="Boistard P."/>
            <person name="Becker A."/>
            <person name="Boutry M."/>
            <person name="Cadieu E."/>
            <person name="Dreano S."/>
            <person name="Gloux S."/>
            <person name="Godrie T."/>
            <person name="Goffeau A."/>
            <person name="Kahn D."/>
            <person name="Kiss E."/>
            <person name="Lelaure V."/>
            <person name="Masuy D."/>
            <person name="Pohl T."/>
            <person name="Portetelle D."/>
            <person name="Puehler A."/>
            <person name="Purnelle B."/>
            <person name="Ramsperger U."/>
            <person name="Renard C."/>
            <person name="Thebault P."/>
            <person name="Vandenbol M."/>
            <person name="Weidner S."/>
            <person name="Galibert F."/>
        </authorList>
    </citation>
    <scope>NUCLEOTIDE SEQUENCE [LARGE SCALE GENOMIC DNA]</scope>
    <source>
        <strain>1021</strain>
    </source>
</reference>
<reference key="3">
    <citation type="journal article" date="2001" name="Science">
        <title>The composite genome of the legume symbiont Sinorhizobium meliloti.</title>
        <authorList>
            <person name="Galibert F."/>
            <person name="Finan T.M."/>
            <person name="Long S.R."/>
            <person name="Puehler A."/>
            <person name="Abola P."/>
            <person name="Ampe F."/>
            <person name="Barloy-Hubler F."/>
            <person name="Barnett M.J."/>
            <person name="Becker A."/>
            <person name="Boistard P."/>
            <person name="Bothe G."/>
            <person name="Boutry M."/>
            <person name="Bowser L."/>
            <person name="Buhrmester J."/>
            <person name="Cadieu E."/>
            <person name="Capela D."/>
            <person name="Chain P."/>
            <person name="Cowie A."/>
            <person name="Davis R.W."/>
            <person name="Dreano S."/>
            <person name="Federspiel N.A."/>
            <person name="Fisher R.F."/>
            <person name="Gloux S."/>
            <person name="Godrie T."/>
            <person name="Goffeau A."/>
            <person name="Golding B."/>
            <person name="Gouzy J."/>
            <person name="Gurjal M."/>
            <person name="Hernandez-Lucas I."/>
            <person name="Hong A."/>
            <person name="Huizar L."/>
            <person name="Hyman R.W."/>
            <person name="Jones T."/>
            <person name="Kahn D."/>
            <person name="Kahn M.L."/>
            <person name="Kalman S."/>
            <person name="Keating D.H."/>
            <person name="Kiss E."/>
            <person name="Komp C."/>
            <person name="Lelaure V."/>
            <person name="Masuy D."/>
            <person name="Palm C."/>
            <person name="Peck M.C."/>
            <person name="Pohl T.M."/>
            <person name="Portetelle D."/>
            <person name="Purnelle B."/>
            <person name="Ramsperger U."/>
            <person name="Surzycki R."/>
            <person name="Thebault P."/>
            <person name="Vandenbol M."/>
            <person name="Vorhoelter F.J."/>
            <person name="Weidner S."/>
            <person name="Wells D.H."/>
            <person name="Wong K."/>
            <person name="Yeh K.-C."/>
            <person name="Batut J."/>
        </authorList>
    </citation>
    <scope>NUCLEOTIDE SEQUENCE [LARGE SCALE GENOMIC DNA]</scope>
    <source>
        <strain>1021</strain>
    </source>
</reference>
<accession>P45402</accession>
<sequence>MTRKQKRLAIIGGGVAFLTAAVLLVMFAFSQAVAYFYVPGDLAKADVAPGTRIRLGGLVEAGSVKRGEGRTITFTVTDTLATVPVTYTGILPDLFREGQGVVAEGAFVGGSPVFVADTVLAKHDETYMPKDVADRLKAQGVTLGGEENIR</sequence>
<proteinExistence type="inferred from homology"/>
<comment type="function">
    <text evidence="1">Heme chaperone required for the biogenesis of c-type cytochromes. Transiently binds heme delivered by CcmC and transfers the heme to apo-cytochromes in a process facilitated by CcmF and CcmH.</text>
</comment>
<comment type="subcellular location">
    <subcellularLocation>
        <location evidence="1">Cell inner membrane</location>
        <topology evidence="1">Single-pass type II membrane protein</topology>
        <orientation evidence="1">Periplasmic side</orientation>
    </subcellularLocation>
</comment>
<comment type="similarity">
    <text evidence="1">Belongs to the CcmE/CycJ family.</text>
</comment>
<keyword id="KW-0997">Cell inner membrane</keyword>
<keyword id="KW-1003">Cell membrane</keyword>
<keyword id="KW-0201">Cytochrome c-type biogenesis</keyword>
<keyword id="KW-0349">Heme</keyword>
<keyword id="KW-0408">Iron</keyword>
<keyword id="KW-0472">Membrane</keyword>
<keyword id="KW-0479">Metal-binding</keyword>
<keyword id="KW-1185">Reference proteome</keyword>
<keyword id="KW-0735">Signal-anchor</keyword>
<keyword id="KW-0812">Transmembrane</keyword>
<keyword id="KW-1133">Transmembrane helix</keyword>
<protein>
    <recommendedName>
        <fullName evidence="1">Cytochrome c-type biogenesis protein CcmE</fullName>
    </recommendedName>
    <alternativeName>
        <fullName evidence="1">Cytochrome c maturation protein E</fullName>
    </alternativeName>
    <alternativeName>
        <fullName evidence="1">Heme chaperone CcmE</fullName>
    </alternativeName>
</protein>
<feature type="chain" id="PRO_0000201582" description="Cytochrome c-type biogenesis protein CcmE">
    <location>
        <begin position="1"/>
        <end position="150"/>
    </location>
</feature>
<feature type="topological domain" description="Cytoplasmic" evidence="1">
    <location>
        <begin position="1"/>
        <end position="7"/>
    </location>
</feature>
<feature type="transmembrane region" description="Helical; Signal-anchor for type II membrane protein" evidence="1">
    <location>
        <begin position="8"/>
        <end position="28"/>
    </location>
</feature>
<feature type="topological domain" description="Periplasmic" evidence="1">
    <location>
        <begin position="29"/>
        <end position="150"/>
    </location>
</feature>
<feature type="binding site" description="covalent" evidence="1">
    <location>
        <position position="123"/>
    </location>
    <ligand>
        <name>heme</name>
        <dbReference type="ChEBI" id="CHEBI:30413"/>
    </ligand>
</feature>
<feature type="binding site" description="axial binding residue" evidence="1">
    <location>
        <position position="127"/>
    </location>
    <ligand>
        <name>heme</name>
        <dbReference type="ChEBI" id="CHEBI:30413"/>
    </ligand>
    <ligandPart>
        <name>Fe</name>
        <dbReference type="ChEBI" id="CHEBI:18248"/>
    </ligandPart>
</feature>
<organism>
    <name type="scientific">Rhizobium meliloti (strain 1021)</name>
    <name type="common">Ensifer meliloti</name>
    <name type="synonym">Sinorhizobium meliloti</name>
    <dbReference type="NCBI Taxonomy" id="266834"/>
    <lineage>
        <taxon>Bacteria</taxon>
        <taxon>Pseudomonadati</taxon>
        <taxon>Pseudomonadota</taxon>
        <taxon>Alphaproteobacteria</taxon>
        <taxon>Hyphomicrobiales</taxon>
        <taxon>Rhizobiaceae</taxon>
        <taxon>Sinorhizobium/Ensifer group</taxon>
        <taxon>Sinorhizobium</taxon>
    </lineage>
</organism>
<gene>
    <name evidence="1" type="primary">ccmE</name>
    <name evidence="1" type="synonym">cycJ</name>
    <name type="ordered locus">R01018</name>
    <name type="ORF">SMc02362</name>
</gene>